<evidence type="ECO:0000255" key="1">
    <source>
        <dbReference type="HAMAP-Rule" id="MF_01850"/>
    </source>
</evidence>
<protein>
    <recommendedName>
        <fullName evidence="1">tRNA-cytidine(32) 2-sulfurtransferase 2</fullName>
        <ecNumber evidence="1">2.8.1.-</ecNumber>
    </recommendedName>
    <alternativeName>
        <fullName evidence="1">Two-thiocytidine biosynthesis protein A 2</fullName>
    </alternativeName>
    <alternativeName>
        <fullName evidence="1">tRNA 2-thiocytidine biosynthesis protein TtcA 2</fullName>
    </alternativeName>
</protein>
<feature type="chain" id="PRO_0000348730" description="tRNA-cytidine(32) 2-sulfurtransferase 2">
    <location>
        <begin position="1"/>
        <end position="267"/>
    </location>
</feature>
<feature type="short sequence motif" description="PP-loop motif" evidence="1">
    <location>
        <begin position="42"/>
        <end position="47"/>
    </location>
</feature>
<feature type="binding site" evidence="1">
    <location>
        <position position="117"/>
    </location>
    <ligand>
        <name>[4Fe-4S] cluster</name>
        <dbReference type="ChEBI" id="CHEBI:49883"/>
    </ligand>
</feature>
<feature type="binding site" evidence="1">
    <location>
        <position position="120"/>
    </location>
    <ligand>
        <name>[4Fe-4S] cluster</name>
        <dbReference type="ChEBI" id="CHEBI:49883"/>
    </ligand>
</feature>
<feature type="binding site" evidence="1">
    <location>
        <position position="208"/>
    </location>
    <ligand>
        <name>[4Fe-4S] cluster</name>
        <dbReference type="ChEBI" id="CHEBI:49883"/>
    </ligand>
</feature>
<dbReference type="EC" id="2.8.1.-" evidence="1"/>
<dbReference type="EMBL" id="CP000803">
    <property type="protein sequence ID" value="ABU61579.1"/>
    <property type="molecule type" value="Genomic_DNA"/>
</dbReference>
<dbReference type="SMR" id="A7NC76"/>
<dbReference type="KEGG" id="fta:FTA_1103"/>
<dbReference type="HOGENOM" id="CLU_026481_0_0_6"/>
<dbReference type="GO" id="GO:0005737">
    <property type="term" value="C:cytoplasm"/>
    <property type="evidence" value="ECO:0007669"/>
    <property type="project" value="UniProtKB-SubCell"/>
</dbReference>
<dbReference type="GO" id="GO:0051539">
    <property type="term" value="F:4 iron, 4 sulfur cluster binding"/>
    <property type="evidence" value="ECO:0007669"/>
    <property type="project" value="UniProtKB-UniRule"/>
</dbReference>
<dbReference type="GO" id="GO:0005524">
    <property type="term" value="F:ATP binding"/>
    <property type="evidence" value="ECO:0007669"/>
    <property type="project" value="UniProtKB-UniRule"/>
</dbReference>
<dbReference type="GO" id="GO:0000287">
    <property type="term" value="F:magnesium ion binding"/>
    <property type="evidence" value="ECO:0007669"/>
    <property type="project" value="UniProtKB-UniRule"/>
</dbReference>
<dbReference type="GO" id="GO:0016783">
    <property type="term" value="F:sulfurtransferase activity"/>
    <property type="evidence" value="ECO:0007669"/>
    <property type="project" value="UniProtKB-UniRule"/>
</dbReference>
<dbReference type="GO" id="GO:0000049">
    <property type="term" value="F:tRNA binding"/>
    <property type="evidence" value="ECO:0007669"/>
    <property type="project" value="UniProtKB-KW"/>
</dbReference>
<dbReference type="GO" id="GO:0034227">
    <property type="term" value="P:tRNA thio-modification"/>
    <property type="evidence" value="ECO:0007669"/>
    <property type="project" value="UniProtKB-UniRule"/>
</dbReference>
<dbReference type="CDD" id="cd24138">
    <property type="entry name" value="TtcA-like"/>
    <property type="match status" value="1"/>
</dbReference>
<dbReference type="Gene3D" id="3.40.50.620">
    <property type="entry name" value="HUPs"/>
    <property type="match status" value="1"/>
</dbReference>
<dbReference type="HAMAP" id="MF_01850">
    <property type="entry name" value="TtcA"/>
    <property type="match status" value="1"/>
</dbReference>
<dbReference type="InterPro" id="IPR014729">
    <property type="entry name" value="Rossmann-like_a/b/a_fold"/>
</dbReference>
<dbReference type="InterPro" id="IPR011063">
    <property type="entry name" value="TilS/TtcA_N"/>
</dbReference>
<dbReference type="InterPro" id="IPR012089">
    <property type="entry name" value="tRNA_Cyd_32_2_STrfase"/>
</dbReference>
<dbReference type="InterPro" id="IPR035107">
    <property type="entry name" value="tRNA_thiolation_TtcA_Ctu1"/>
</dbReference>
<dbReference type="NCBIfam" id="NF007972">
    <property type="entry name" value="PRK10696.1"/>
    <property type="match status" value="1"/>
</dbReference>
<dbReference type="PANTHER" id="PTHR43686:SF1">
    <property type="entry name" value="AMINOTRAN_5 DOMAIN-CONTAINING PROTEIN"/>
    <property type="match status" value="1"/>
</dbReference>
<dbReference type="PANTHER" id="PTHR43686">
    <property type="entry name" value="SULFURTRANSFERASE-RELATED"/>
    <property type="match status" value="1"/>
</dbReference>
<dbReference type="Pfam" id="PF01171">
    <property type="entry name" value="ATP_bind_3"/>
    <property type="match status" value="1"/>
</dbReference>
<dbReference type="PIRSF" id="PIRSF004976">
    <property type="entry name" value="ATPase_YdaO"/>
    <property type="match status" value="1"/>
</dbReference>
<dbReference type="SUPFAM" id="SSF52402">
    <property type="entry name" value="Adenine nucleotide alpha hydrolases-like"/>
    <property type="match status" value="1"/>
</dbReference>
<keyword id="KW-0004">4Fe-4S</keyword>
<keyword id="KW-0067">ATP-binding</keyword>
<keyword id="KW-0963">Cytoplasm</keyword>
<keyword id="KW-0408">Iron</keyword>
<keyword id="KW-0411">Iron-sulfur</keyword>
<keyword id="KW-0460">Magnesium</keyword>
<keyword id="KW-0479">Metal-binding</keyword>
<keyword id="KW-0547">Nucleotide-binding</keyword>
<keyword id="KW-0694">RNA-binding</keyword>
<keyword id="KW-0808">Transferase</keyword>
<keyword id="KW-0819">tRNA processing</keyword>
<keyword id="KW-0820">tRNA-binding</keyword>
<proteinExistence type="inferred from homology"/>
<organism>
    <name type="scientific">Francisella tularensis subsp. holarctica (strain FTNF002-00 / FTA)</name>
    <dbReference type="NCBI Taxonomy" id="458234"/>
    <lineage>
        <taxon>Bacteria</taxon>
        <taxon>Pseudomonadati</taxon>
        <taxon>Pseudomonadota</taxon>
        <taxon>Gammaproteobacteria</taxon>
        <taxon>Thiotrichales</taxon>
        <taxon>Francisellaceae</taxon>
        <taxon>Francisella</taxon>
    </lineage>
</organism>
<name>TTCA2_FRATF</name>
<gene>
    <name evidence="1" type="primary">ttcA2</name>
    <name type="ordered locus">FTA_1103</name>
</gene>
<comment type="function">
    <text evidence="1">Catalyzes the ATP-dependent 2-thiolation of cytidine in position 32 of tRNA, to form 2-thiocytidine (s(2)C32). The sulfur atoms are provided by the cysteine/cysteine desulfurase (IscS) system.</text>
</comment>
<comment type="catalytic activity">
    <reaction evidence="1">
        <text>cytidine(32) in tRNA + S-sulfanyl-L-cysteinyl-[cysteine desulfurase] + AH2 + ATP = 2-thiocytidine(32) in tRNA + L-cysteinyl-[cysteine desulfurase] + A + AMP + diphosphate + H(+)</text>
        <dbReference type="Rhea" id="RHEA:57048"/>
        <dbReference type="Rhea" id="RHEA-COMP:10288"/>
        <dbReference type="Rhea" id="RHEA-COMP:12157"/>
        <dbReference type="Rhea" id="RHEA-COMP:12158"/>
        <dbReference type="Rhea" id="RHEA-COMP:14821"/>
        <dbReference type="ChEBI" id="CHEBI:13193"/>
        <dbReference type="ChEBI" id="CHEBI:15378"/>
        <dbReference type="ChEBI" id="CHEBI:17499"/>
        <dbReference type="ChEBI" id="CHEBI:29950"/>
        <dbReference type="ChEBI" id="CHEBI:30616"/>
        <dbReference type="ChEBI" id="CHEBI:33019"/>
        <dbReference type="ChEBI" id="CHEBI:61963"/>
        <dbReference type="ChEBI" id="CHEBI:82748"/>
        <dbReference type="ChEBI" id="CHEBI:141453"/>
        <dbReference type="ChEBI" id="CHEBI:456215"/>
    </reaction>
    <physiologicalReaction direction="left-to-right" evidence="1">
        <dbReference type="Rhea" id="RHEA:57049"/>
    </physiologicalReaction>
</comment>
<comment type="cofactor">
    <cofactor evidence="1">
        <name>Mg(2+)</name>
        <dbReference type="ChEBI" id="CHEBI:18420"/>
    </cofactor>
</comment>
<comment type="cofactor">
    <cofactor evidence="1">
        <name>[4Fe-4S] cluster</name>
        <dbReference type="ChEBI" id="CHEBI:49883"/>
    </cofactor>
    <text evidence="1">Binds 1 [4Fe-4S] cluster per subunit. The cluster is chelated by three Cys residues, the fourth Fe has a free coordination site that may bind a sulfur atom transferred from the persulfide of IscS.</text>
</comment>
<comment type="pathway">
    <text evidence="1">tRNA modification.</text>
</comment>
<comment type="subunit">
    <text evidence="1">Homodimer.</text>
</comment>
<comment type="subcellular location">
    <subcellularLocation>
        <location evidence="1">Cytoplasm</location>
    </subcellularLocation>
</comment>
<comment type="miscellaneous">
    <text evidence="1">The thiolation reaction likely consists of two steps: a first activation step by ATP to form an adenylated intermediate of the target base of tRNA, and a second nucleophilic substitution step of the sulfur (S) atom supplied by the hydrosulfide attached to the Fe-S cluster.</text>
</comment>
<comment type="similarity">
    <text evidence="1">Belongs to the TtcA family.</text>
</comment>
<reference key="1">
    <citation type="journal article" date="2009" name="PLoS ONE">
        <title>Complete genome sequence of Francisella tularensis subspecies holarctica FTNF002-00.</title>
        <authorList>
            <person name="Barabote R.D."/>
            <person name="Xie G."/>
            <person name="Brettin T.S."/>
            <person name="Hinrichs S.H."/>
            <person name="Fey P.D."/>
            <person name="Jay J.J."/>
            <person name="Engle J.L."/>
            <person name="Godbole S.D."/>
            <person name="Noronha J.M."/>
            <person name="Scheuermann R.H."/>
            <person name="Zhou L.W."/>
            <person name="Lion C."/>
            <person name="Dempsey M.P."/>
        </authorList>
    </citation>
    <scope>NUCLEOTIDE SEQUENCE [LARGE SCALE GENOMIC DNA]</scope>
    <source>
        <strain>FTNF002-00 / FTA</strain>
    </source>
</reference>
<accession>A7NC76</accession>
<sequence length="267" mass="30985">MTNNTDKQTLKKLERQILRKTTQVINQYNMIEDGDKIMVCLSGGKDSYCLLEMLLLLQKKAPISFEIIAVNLDQKQPGFPEEVLPNYLKNKGVEFHIIERDTYSIVKRVIPEGKTTCGLCSRMRRGILYDFAEENNVTKVALGHHRDDIIETFFLNLFYNGSIKAMPTKLLSDDKRNIVIRPLAFVSEKETLEYSQLKEFPIIPCNLCGSQDNLQRVFIKDMLNRWEQNNPERKNVIFKALSNISPSQMLDKELFDFINISKDDIQR</sequence>